<protein>
    <recommendedName>
        <fullName evidence="7">FYN-binding protein 2</fullName>
    </recommendedName>
    <alternativeName>
        <fullName evidence="5">Activation-dependent, raft-recruited ADAP-like phosphoprotein</fullName>
    </alternativeName>
</protein>
<organism>
    <name type="scientific">Homo sapiens</name>
    <name type="common">Human</name>
    <dbReference type="NCBI Taxonomy" id="9606"/>
    <lineage>
        <taxon>Eukaryota</taxon>
        <taxon>Metazoa</taxon>
        <taxon>Chordata</taxon>
        <taxon>Craniata</taxon>
        <taxon>Vertebrata</taxon>
        <taxon>Euteleostomi</taxon>
        <taxon>Mammalia</taxon>
        <taxon>Eutheria</taxon>
        <taxon>Euarchontoglires</taxon>
        <taxon>Primates</taxon>
        <taxon>Haplorrhini</taxon>
        <taxon>Catarrhini</taxon>
        <taxon>Hominidae</taxon>
        <taxon>Homo</taxon>
    </lineage>
</organism>
<evidence type="ECO:0000255" key="1">
    <source>
        <dbReference type="PROSITE-ProRule" id="PRU00192"/>
    </source>
</evidence>
<evidence type="ECO:0000256" key="2">
    <source>
        <dbReference type="SAM" id="MobiDB-lite"/>
    </source>
</evidence>
<evidence type="ECO:0000269" key="3">
    <source>
    </source>
</evidence>
<evidence type="ECO:0000303" key="4">
    <source>
    </source>
</evidence>
<evidence type="ECO:0000303" key="5">
    <source>
    </source>
</evidence>
<evidence type="ECO:0000305" key="6"/>
<evidence type="ECO:0000312" key="7">
    <source>
        <dbReference type="HGNC" id="HGNC:27295"/>
    </source>
</evidence>
<feature type="chain" id="PRO_0000304583" description="FYN-binding protein 2">
    <location>
        <begin position="1"/>
        <end position="728"/>
    </location>
</feature>
<feature type="domain" description="SH3" evidence="1">
    <location>
        <begin position="664"/>
        <end position="724"/>
    </location>
</feature>
<feature type="region of interest" description="Disordered" evidence="2">
    <location>
        <begin position="17"/>
        <end position="76"/>
    </location>
</feature>
<feature type="region of interest" description="Disordered" evidence="2">
    <location>
        <begin position="250"/>
        <end position="287"/>
    </location>
</feature>
<feature type="region of interest" description="Disordered" evidence="2">
    <location>
        <begin position="367"/>
        <end position="390"/>
    </location>
</feature>
<feature type="short sequence motif" description="SH2-binding; to LCP2" evidence="3">
    <location>
        <begin position="521"/>
        <end position="524"/>
    </location>
</feature>
<feature type="compositionally biased region" description="Polar residues" evidence="2">
    <location>
        <begin position="42"/>
        <end position="75"/>
    </location>
</feature>
<feature type="compositionally biased region" description="Pro residues" evidence="2">
    <location>
        <begin position="276"/>
        <end position="285"/>
    </location>
</feature>
<feature type="compositionally biased region" description="Basic and acidic residues" evidence="2">
    <location>
        <begin position="377"/>
        <end position="390"/>
    </location>
</feature>
<feature type="modified residue" description="Phosphotyrosine" evidence="3">
    <location>
        <position position="491"/>
    </location>
</feature>
<feature type="modified residue" description="Phosphotyrosine" evidence="3">
    <location>
        <position position="587"/>
    </location>
</feature>
<feature type="splice variant" id="VSP_028031" description="In isoform 2." evidence="4">
    <original>PTYE</original>
    <variation>RRCL</variation>
    <location>
        <begin position="355"/>
        <end position="358"/>
    </location>
</feature>
<feature type="splice variant" id="VSP_028032" description="In isoform 2." evidence="4">
    <location>
        <begin position="359"/>
        <end position="728"/>
    </location>
</feature>
<feature type="sequence variant" id="VAR_035041" description="In dbSNP:rs17114336.">
    <original>I</original>
    <variation>M</variation>
    <location>
        <position position="125"/>
    </location>
</feature>
<feature type="mutagenesis site" description="Decrease in phosphorylation and interaction with LCP2. Significant decrease in phosphorylation and loss of interaction with LCP2; when associated with F-587." evidence="3">
    <original>Y</original>
    <variation>F</variation>
    <location>
        <position position="491"/>
    </location>
</feature>
<feature type="mutagenesis site" description="Decrease in phosphorylation and interaction with LCP2. Significant decrease in phosphorylation and loss of interaction with LCP2; when associated with F-491." evidence="3">
    <original>Y</original>
    <variation>F</variation>
    <location>
        <position position="587"/>
    </location>
</feature>
<feature type="sequence conflict" description="In Ref. 3; CAH56148." evidence="6" ref="3">
    <original>C</original>
    <variation>R</variation>
    <location>
        <position position="103"/>
    </location>
</feature>
<feature type="sequence conflict" description="In Ref. 3; CAH56148." evidence="6" ref="3">
    <original>K</original>
    <variation>R</variation>
    <location>
        <position position="400"/>
    </location>
</feature>
<feature type="sequence conflict" description="In Ref. 3; CAH56148." evidence="6" ref="3">
    <original>H</original>
    <variation>R</variation>
    <location>
        <position position="718"/>
    </location>
</feature>
<sequence>MEGEGVRNFKELRAKFQNLDAPPLPGPIKFPAGVSPKGDIGGTQSTQILANGKPLSSNHKQRTPYCSSSESQPLQPQKIKLAQKSEIPKCSNSPGPLGKSTVCSATSSQKASLLLEVTQSNVEIITKEKVMVANSFRNKLWNWEKVSSQKSEMSSALLLANYGSKAIHLEGQKGMGLTPEEPRKKLETKGAQTLPSQKHVVAPKILHNVSEDPSFVISQHIRKSWENPPPERSPASSPCQPIYECELASQAPEKQPDVRHHHLPKTKPLPSIDSLGPPPPKPSRPPIVNLQAFQRQPAAVPKTQGEVTVEEGSLSPERLFNAEFEEPHNYEATISYLRHSGNSINLCTAKEIADPTYEVGIEELQKPGKNFPYPEPSAKHEDKKMKEKQPCELKPKNTEKEPYSNHVFKVDACEGTPEKIQMTNVHTGRRNMLAGKQEAMIDIIQTNPCPEGPKLARHSQGHCGHLEVLESTKETPDLGVSKTSSISEEIYDDVEYSRKEVPKLNYSSSLASSSEENRELYEDVYKTKNNYPKIDLDGKEALKRLQQFFKKEKDRFKIKKTKSKENLSAFSILLPDLELKSQEVIIYDDVDLSEKESKDEDKLKMWKPKFLTPKEKKEKNGAEESESFSPRNFFKTKKQNLEKNRMKREEKLFRERFKYDKEIIVINTAVACSNNSRNGIFDLPISPGEELEVIDTTEQNLVICRNSKGKYGYVLIEHLDFKHQSWSP</sequence>
<reference key="1">
    <citation type="journal article" date="2016" name="J. Immunol.">
        <title>ARAP, a novel adaptor protein, is required for TCR signaling and integrin-mediated adhesion.</title>
        <authorList>
            <person name="Jung S.H."/>
            <person name="Yoo E.H."/>
            <person name="Yu M.J."/>
            <person name="Song H.M."/>
            <person name="Kang H.Y."/>
            <person name="Cho J.Y."/>
            <person name="Lee J.R."/>
        </authorList>
    </citation>
    <scope>NUCLEOTIDE SEQUENCE [MRNA]</scope>
    <scope>FUNCTION</scope>
    <scope>SUBCELLULAR LOCATION</scope>
    <scope>TISSUE SPECIFICITY</scope>
    <scope>PHOSPHORYLATION AT TYR-491 AND TYR-587</scope>
    <scope>INTERACTION WITH LCP2; SKAP1; LCK AND FYN</scope>
    <scope>MUTAGENESIS OF TYR-491 AND TYR-587</scope>
</reference>
<reference key="2">
    <citation type="journal article" date="2004" name="Nat. Genet.">
        <title>Complete sequencing and characterization of 21,243 full-length human cDNAs.</title>
        <authorList>
            <person name="Ota T."/>
            <person name="Suzuki Y."/>
            <person name="Nishikawa T."/>
            <person name="Otsuki T."/>
            <person name="Sugiyama T."/>
            <person name="Irie R."/>
            <person name="Wakamatsu A."/>
            <person name="Hayashi K."/>
            <person name="Sato H."/>
            <person name="Nagai K."/>
            <person name="Kimura K."/>
            <person name="Makita H."/>
            <person name="Sekine M."/>
            <person name="Obayashi M."/>
            <person name="Nishi T."/>
            <person name="Shibahara T."/>
            <person name="Tanaka T."/>
            <person name="Ishii S."/>
            <person name="Yamamoto J."/>
            <person name="Saito K."/>
            <person name="Kawai Y."/>
            <person name="Isono Y."/>
            <person name="Nakamura Y."/>
            <person name="Nagahari K."/>
            <person name="Murakami K."/>
            <person name="Yasuda T."/>
            <person name="Iwayanagi T."/>
            <person name="Wagatsuma M."/>
            <person name="Shiratori A."/>
            <person name="Sudo H."/>
            <person name="Hosoiri T."/>
            <person name="Kaku Y."/>
            <person name="Kodaira H."/>
            <person name="Kondo H."/>
            <person name="Sugawara M."/>
            <person name="Takahashi M."/>
            <person name="Kanda K."/>
            <person name="Yokoi T."/>
            <person name="Furuya T."/>
            <person name="Kikkawa E."/>
            <person name="Omura Y."/>
            <person name="Abe K."/>
            <person name="Kamihara K."/>
            <person name="Katsuta N."/>
            <person name="Sato K."/>
            <person name="Tanikawa M."/>
            <person name="Yamazaki M."/>
            <person name="Ninomiya K."/>
            <person name="Ishibashi T."/>
            <person name="Yamashita H."/>
            <person name="Murakawa K."/>
            <person name="Fujimori K."/>
            <person name="Tanai H."/>
            <person name="Kimata M."/>
            <person name="Watanabe M."/>
            <person name="Hiraoka S."/>
            <person name="Chiba Y."/>
            <person name="Ishida S."/>
            <person name="Ono Y."/>
            <person name="Takiguchi S."/>
            <person name="Watanabe S."/>
            <person name="Yosida M."/>
            <person name="Hotuta T."/>
            <person name="Kusano J."/>
            <person name="Kanehori K."/>
            <person name="Takahashi-Fujii A."/>
            <person name="Hara H."/>
            <person name="Tanase T.-O."/>
            <person name="Nomura Y."/>
            <person name="Togiya S."/>
            <person name="Komai F."/>
            <person name="Hara R."/>
            <person name="Takeuchi K."/>
            <person name="Arita M."/>
            <person name="Imose N."/>
            <person name="Musashino K."/>
            <person name="Yuuki H."/>
            <person name="Oshima A."/>
            <person name="Sasaki N."/>
            <person name="Aotsuka S."/>
            <person name="Yoshikawa Y."/>
            <person name="Matsunawa H."/>
            <person name="Ichihara T."/>
            <person name="Shiohata N."/>
            <person name="Sano S."/>
            <person name="Moriya S."/>
            <person name="Momiyama H."/>
            <person name="Satoh N."/>
            <person name="Takami S."/>
            <person name="Terashima Y."/>
            <person name="Suzuki O."/>
            <person name="Nakagawa S."/>
            <person name="Senoh A."/>
            <person name="Mizoguchi H."/>
            <person name="Goto Y."/>
            <person name="Shimizu F."/>
            <person name="Wakebe H."/>
            <person name="Hishigaki H."/>
            <person name="Watanabe T."/>
            <person name="Sugiyama A."/>
            <person name="Takemoto M."/>
            <person name="Kawakami B."/>
            <person name="Yamazaki M."/>
            <person name="Watanabe K."/>
            <person name="Kumagai A."/>
            <person name="Itakura S."/>
            <person name="Fukuzumi Y."/>
            <person name="Fujimori Y."/>
            <person name="Komiyama M."/>
            <person name="Tashiro H."/>
            <person name="Tanigami A."/>
            <person name="Fujiwara T."/>
            <person name="Ono T."/>
            <person name="Yamada K."/>
            <person name="Fujii Y."/>
            <person name="Ozaki K."/>
            <person name="Hirao M."/>
            <person name="Ohmori Y."/>
            <person name="Kawabata A."/>
            <person name="Hikiji T."/>
            <person name="Kobatake N."/>
            <person name="Inagaki H."/>
            <person name="Ikema Y."/>
            <person name="Okamoto S."/>
            <person name="Okitani R."/>
            <person name="Kawakami T."/>
            <person name="Noguchi S."/>
            <person name="Itoh T."/>
            <person name="Shigeta K."/>
            <person name="Senba T."/>
            <person name="Matsumura K."/>
            <person name="Nakajima Y."/>
            <person name="Mizuno T."/>
            <person name="Morinaga M."/>
            <person name="Sasaki M."/>
            <person name="Togashi T."/>
            <person name="Oyama M."/>
            <person name="Hata H."/>
            <person name="Watanabe M."/>
            <person name="Komatsu T."/>
            <person name="Mizushima-Sugano J."/>
            <person name="Satoh T."/>
            <person name="Shirai Y."/>
            <person name="Takahashi Y."/>
            <person name="Nakagawa K."/>
            <person name="Okumura K."/>
            <person name="Nagase T."/>
            <person name="Nomura N."/>
            <person name="Kikuchi H."/>
            <person name="Masuho Y."/>
            <person name="Yamashita R."/>
            <person name="Nakai K."/>
            <person name="Yada T."/>
            <person name="Nakamura Y."/>
            <person name="Ohara O."/>
            <person name="Isogai T."/>
            <person name="Sugano S."/>
        </authorList>
    </citation>
    <scope>NUCLEOTIDE SEQUENCE [LARGE SCALE MRNA] (ISOFORM 2)</scope>
    <source>
        <tissue>Fetal brain</tissue>
    </source>
</reference>
<reference key="3">
    <citation type="journal article" date="2007" name="BMC Genomics">
        <title>The full-ORF clone resource of the German cDNA consortium.</title>
        <authorList>
            <person name="Bechtel S."/>
            <person name="Rosenfelder H."/>
            <person name="Duda A."/>
            <person name="Schmidt C.P."/>
            <person name="Ernst U."/>
            <person name="Wellenreuther R."/>
            <person name="Mehrle A."/>
            <person name="Schuster C."/>
            <person name="Bahr A."/>
            <person name="Bloecker H."/>
            <person name="Heubner D."/>
            <person name="Hoerlein A."/>
            <person name="Michel G."/>
            <person name="Wedler H."/>
            <person name="Koehrer K."/>
            <person name="Ottenwaelder B."/>
            <person name="Poustka A."/>
            <person name="Wiemann S."/>
            <person name="Schupp I."/>
        </authorList>
    </citation>
    <scope>NUCLEOTIDE SEQUENCE [LARGE SCALE MRNA] (ISOFORM 1)</scope>
    <source>
        <tissue>Salivary gland</tissue>
    </source>
</reference>
<reference key="4">
    <citation type="journal article" date="2006" name="Nature">
        <title>The DNA sequence and biological annotation of human chromosome 1.</title>
        <authorList>
            <person name="Gregory S.G."/>
            <person name="Barlow K.F."/>
            <person name="McLay K.E."/>
            <person name="Kaul R."/>
            <person name="Swarbreck D."/>
            <person name="Dunham A."/>
            <person name="Scott C.E."/>
            <person name="Howe K.L."/>
            <person name="Woodfine K."/>
            <person name="Spencer C.C.A."/>
            <person name="Jones M.C."/>
            <person name="Gillson C."/>
            <person name="Searle S."/>
            <person name="Zhou Y."/>
            <person name="Kokocinski F."/>
            <person name="McDonald L."/>
            <person name="Evans R."/>
            <person name="Phillips K."/>
            <person name="Atkinson A."/>
            <person name="Cooper R."/>
            <person name="Jones C."/>
            <person name="Hall R.E."/>
            <person name="Andrews T.D."/>
            <person name="Lloyd C."/>
            <person name="Ainscough R."/>
            <person name="Almeida J.P."/>
            <person name="Ambrose K.D."/>
            <person name="Anderson F."/>
            <person name="Andrew R.W."/>
            <person name="Ashwell R.I.S."/>
            <person name="Aubin K."/>
            <person name="Babbage A.K."/>
            <person name="Bagguley C.L."/>
            <person name="Bailey J."/>
            <person name="Beasley H."/>
            <person name="Bethel G."/>
            <person name="Bird C.P."/>
            <person name="Bray-Allen S."/>
            <person name="Brown J.Y."/>
            <person name="Brown A.J."/>
            <person name="Buckley D."/>
            <person name="Burton J."/>
            <person name="Bye J."/>
            <person name="Carder C."/>
            <person name="Chapman J.C."/>
            <person name="Clark S.Y."/>
            <person name="Clarke G."/>
            <person name="Clee C."/>
            <person name="Cobley V."/>
            <person name="Collier R.E."/>
            <person name="Corby N."/>
            <person name="Coville G.J."/>
            <person name="Davies J."/>
            <person name="Deadman R."/>
            <person name="Dunn M."/>
            <person name="Earthrowl M."/>
            <person name="Ellington A.G."/>
            <person name="Errington H."/>
            <person name="Frankish A."/>
            <person name="Frankland J."/>
            <person name="French L."/>
            <person name="Garner P."/>
            <person name="Garnett J."/>
            <person name="Gay L."/>
            <person name="Ghori M.R.J."/>
            <person name="Gibson R."/>
            <person name="Gilby L.M."/>
            <person name="Gillett W."/>
            <person name="Glithero R.J."/>
            <person name="Grafham D.V."/>
            <person name="Griffiths C."/>
            <person name="Griffiths-Jones S."/>
            <person name="Grocock R."/>
            <person name="Hammond S."/>
            <person name="Harrison E.S.I."/>
            <person name="Hart E."/>
            <person name="Haugen E."/>
            <person name="Heath P.D."/>
            <person name="Holmes S."/>
            <person name="Holt K."/>
            <person name="Howden P.J."/>
            <person name="Hunt A.R."/>
            <person name="Hunt S.E."/>
            <person name="Hunter G."/>
            <person name="Isherwood J."/>
            <person name="James R."/>
            <person name="Johnson C."/>
            <person name="Johnson D."/>
            <person name="Joy A."/>
            <person name="Kay M."/>
            <person name="Kershaw J.K."/>
            <person name="Kibukawa M."/>
            <person name="Kimberley A.M."/>
            <person name="King A."/>
            <person name="Knights A.J."/>
            <person name="Lad H."/>
            <person name="Laird G."/>
            <person name="Lawlor S."/>
            <person name="Leongamornlert D.A."/>
            <person name="Lloyd D.M."/>
            <person name="Loveland J."/>
            <person name="Lovell J."/>
            <person name="Lush M.J."/>
            <person name="Lyne R."/>
            <person name="Martin S."/>
            <person name="Mashreghi-Mohammadi M."/>
            <person name="Matthews L."/>
            <person name="Matthews N.S.W."/>
            <person name="McLaren S."/>
            <person name="Milne S."/>
            <person name="Mistry S."/>
            <person name="Moore M.J.F."/>
            <person name="Nickerson T."/>
            <person name="O'Dell C.N."/>
            <person name="Oliver K."/>
            <person name="Palmeiri A."/>
            <person name="Palmer S.A."/>
            <person name="Parker A."/>
            <person name="Patel D."/>
            <person name="Pearce A.V."/>
            <person name="Peck A.I."/>
            <person name="Pelan S."/>
            <person name="Phelps K."/>
            <person name="Phillimore B.J."/>
            <person name="Plumb R."/>
            <person name="Rajan J."/>
            <person name="Raymond C."/>
            <person name="Rouse G."/>
            <person name="Saenphimmachak C."/>
            <person name="Sehra H.K."/>
            <person name="Sheridan E."/>
            <person name="Shownkeen R."/>
            <person name="Sims S."/>
            <person name="Skuce C.D."/>
            <person name="Smith M."/>
            <person name="Steward C."/>
            <person name="Subramanian S."/>
            <person name="Sycamore N."/>
            <person name="Tracey A."/>
            <person name="Tromans A."/>
            <person name="Van Helmond Z."/>
            <person name="Wall M."/>
            <person name="Wallis J.M."/>
            <person name="White S."/>
            <person name="Whitehead S.L."/>
            <person name="Wilkinson J.E."/>
            <person name="Willey D.L."/>
            <person name="Williams H."/>
            <person name="Wilming L."/>
            <person name="Wray P.W."/>
            <person name="Wu Z."/>
            <person name="Coulson A."/>
            <person name="Vaudin M."/>
            <person name="Sulston J.E."/>
            <person name="Durbin R.M."/>
            <person name="Hubbard T."/>
            <person name="Wooster R."/>
            <person name="Dunham I."/>
            <person name="Carter N.P."/>
            <person name="McVean G."/>
            <person name="Ross M.T."/>
            <person name="Harrow J."/>
            <person name="Olson M.V."/>
            <person name="Beck S."/>
            <person name="Rogers J."/>
            <person name="Bentley D.R."/>
        </authorList>
    </citation>
    <scope>NUCLEOTIDE SEQUENCE [LARGE SCALE GENOMIC DNA]</scope>
</reference>
<accession>Q5VWT5</accession>
<accession>Q63HM3</accession>
<accession>Q6ZUY6</accession>
<proteinExistence type="evidence at protein level"/>
<dbReference type="EMBL" id="AK125198">
    <property type="protein sequence ID" value="BAC86080.1"/>
    <property type="molecule type" value="mRNA"/>
</dbReference>
<dbReference type="EMBL" id="BX648439">
    <property type="protein sequence ID" value="CAH56148.1"/>
    <property type="molecule type" value="mRNA"/>
</dbReference>
<dbReference type="EMBL" id="AL035705">
    <property type="status" value="NOT_ANNOTATED_CDS"/>
    <property type="molecule type" value="Genomic_DNA"/>
</dbReference>
<dbReference type="EMBL" id="AL360295">
    <property type="status" value="NOT_ANNOTATED_CDS"/>
    <property type="molecule type" value="Genomic_DNA"/>
</dbReference>
<dbReference type="CCDS" id="CCDS30729.1">
    <molecule id="Q5VWT5-1"/>
</dbReference>
<dbReference type="RefSeq" id="NP_001004303.3">
    <molecule id="Q5VWT5-1"/>
    <property type="nucleotide sequence ID" value="NM_001004303.4"/>
</dbReference>
<dbReference type="RefSeq" id="XP_054190854.1">
    <molecule id="Q5VWT5-1"/>
    <property type="nucleotide sequence ID" value="XM_054334879.1"/>
</dbReference>
<dbReference type="SMR" id="Q5VWT5"/>
<dbReference type="BioGRID" id="128284">
    <property type="interactions" value="10"/>
</dbReference>
<dbReference type="FunCoup" id="Q5VWT5">
    <property type="interactions" value="294"/>
</dbReference>
<dbReference type="IntAct" id="Q5VWT5">
    <property type="interactions" value="2"/>
</dbReference>
<dbReference type="STRING" id="9606.ENSP00000345972"/>
<dbReference type="iPTMnet" id="Q5VWT5"/>
<dbReference type="PhosphoSitePlus" id="Q5VWT5"/>
<dbReference type="BioMuta" id="FYB2"/>
<dbReference type="DMDM" id="74747442"/>
<dbReference type="MassIVE" id="Q5VWT5"/>
<dbReference type="PaxDb" id="9606-ENSP00000345972"/>
<dbReference type="PeptideAtlas" id="Q5VWT5"/>
<dbReference type="ProteomicsDB" id="65558">
    <molecule id="Q5VWT5-1"/>
</dbReference>
<dbReference type="ProteomicsDB" id="65559">
    <molecule id="Q5VWT5-2"/>
</dbReference>
<dbReference type="Antibodypedia" id="33247">
    <property type="antibodies" value="49 antibodies from 10 providers"/>
</dbReference>
<dbReference type="DNASU" id="199920"/>
<dbReference type="Ensembl" id="ENST00000343433.7">
    <molecule id="Q5VWT5-1"/>
    <property type="protein sequence ID" value="ENSP00000345972.6"/>
    <property type="gene ID" value="ENSG00000187889.13"/>
</dbReference>
<dbReference type="GeneID" id="199920"/>
<dbReference type="KEGG" id="hsa:199920"/>
<dbReference type="MANE-Select" id="ENST00000343433.7">
    <property type="protein sequence ID" value="ENSP00000345972.6"/>
    <property type="RefSeq nucleotide sequence ID" value="NM_001004303.5"/>
    <property type="RefSeq protein sequence ID" value="NP_001004303.3"/>
</dbReference>
<dbReference type="UCSC" id="uc001cym.5">
    <molecule id="Q5VWT5-1"/>
    <property type="organism name" value="human"/>
</dbReference>
<dbReference type="AGR" id="HGNC:27295"/>
<dbReference type="CTD" id="199920"/>
<dbReference type="DisGeNET" id="199920"/>
<dbReference type="GeneCards" id="FYB2"/>
<dbReference type="HGNC" id="HGNC:27295">
    <property type="gene designation" value="FYB2"/>
</dbReference>
<dbReference type="HPA" id="ENSG00000187889">
    <property type="expression patterns" value="Tissue enhanced (choroid plexus, fallopian tube, liver)"/>
</dbReference>
<dbReference type="MIM" id="618478">
    <property type="type" value="gene"/>
</dbReference>
<dbReference type="neXtProt" id="NX_Q5VWT5"/>
<dbReference type="OpenTargets" id="ENSG00000187889"/>
<dbReference type="PharmGKB" id="PA142672418"/>
<dbReference type="VEuPathDB" id="HostDB:ENSG00000187889"/>
<dbReference type="eggNOG" id="ENOG502RXZD">
    <property type="taxonomic scope" value="Eukaryota"/>
</dbReference>
<dbReference type="GeneTree" id="ENSGT00530000063460"/>
<dbReference type="HOGENOM" id="CLU_023222_0_0_1"/>
<dbReference type="InParanoid" id="Q5VWT5"/>
<dbReference type="OMA" id="KPWKNFP"/>
<dbReference type="OrthoDB" id="5986624at2759"/>
<dbReference type="PAN-GO" id="Q5VWT5">
    <property type="GO annotations" value="4 GO annotations based on evolutionary models"/>
</dbReference>
<dbReference type="PhylomeDB" id="Q5VWT5"/>
<dbReference type="TreeFam" id="TF337003"/>
<dbReference type="PathwayCommons" id="Q5VWT5"/>
<dbReference type="SignaLink" id="Q5VWT5"/>
<dbReference type="BioGRID-ORCS" id="199920">
    <property type="hits" value="7 hits in 1132 CRISPR screens"/>
</dbReference>
<dbReference type="ChiTaRS" id="MDK">
    <property type="organism name" value="human"/>
</dbReference>
<dbReference type="GenomeRNAi" id="199920"/>
<dbReference type="Pharos" id="Q5VWT5">
    <property type="development level" value="Tbio"/>
</dbReference>
<dbReference type="PRO" id="PR:Q5VWT5"/>
<dbReference type="Proteomes" id="UP000005640">
    <property type="component" value="Chromosome 1"/>
</dbReference>
<dbReference type="RNAct" id="Q5VWT5">
    <property type="molecule type" value="protein"/>
</dbReference>
<dbReference type="Bgee" id="ENSG00000187889">
    <property type="expression patterns" value="Expressed in right uterine tube and 122 other cell types or tissues"/>
</dbReference>
<dbReference type="GO" id="GO:0001772">
    <property type="term" value="C:immunological synapse"/>
    <property type="evidence" value="ECO:0000314"/>
    <property type="project" value="UniProtKB"/>
</dbReference>
<dbReference type="GO" id="GO:0045121">
    <property type="term" value="C:membrane raft"/>
    <property type="evidence" value="ECO:0000314"/>
    <property type="project" value="UniProtKB"/>
</dbReference>
<dbReference type="GO" id="GO:0005886">
    <property type="term" value="C:plasma membrane"/>
    <property type="evidence" value="ECO:0000318"/>
    <property type="project" value="GO_Central"/>
</dbReference>
<dbReference type="GO" id="GO:0033627">
    <property type="term" value="P:cell adhesion mediated by integrin"/>
    <property type="evidence" value="ECO:0000315"/>
    <property type="project" value="UniProtKB"/>
</dbReference>
<dbReference type="GO" id="GO:0007229">
    <property type="term" value="P:integrin-mediated signaling pathway"/>
    <property type="evidence" value="ECO:0000318"/>
    <property type="project" value="GO_Central"/>
</dbReference>
<dbReference type="GO" id="GO:0072659">
    <property type="term" value="P:protein localization to plasma membrane"/>
    <property type="evidence" value="ECO:0000318"/>
    <property type="project" value="GO_Central"/>
</dbReference>
<dbReference type="GO" id="GO:0050852">
    <property type="term" value="P:T cell receptor signaling pathway"/>
    <property type="evidence" value="ECO:0000315"/>
    <property type="project" value="UniProtKB"/>
</dbReference>
<dbReference type="FunFam" id="2.30.30.40:FF:000220">
    <property type="entry name" value="FYN binding protein 2"/>
    <property type="match status" value="1"/>
</dbReference>
<dbReference type="Gene3D" id="2.30.30.40">
    <property type="entry name" value="SH3 Domains"/>
    <property type="match status" value="1"/>
</dbReference>
<dbReference type="InterPro" id="IPR043443">
    <property type="entry name" value="FYB1/2-like"/>
</dbReference>
<dbReference type="InterPro" id="IPR029294">
    <property type="entry name" value="hSH3"/>
</dbReference>
<dbReference type="InterPro" id="IPR036028">
    <property type="entry name" value="SH3-like_dom_sf"/>
</dbReference>
<dbReference type="InterPro" id="IPR001452">
    <property type="entry name" value="SH3_domain"/>
</dbReference>
<dbReference type="PANTHER" id="PTHR16830:SF1">
    <property type="entry name" value="FYN-BINDING PROTEIN 2"/>
    <property type="match status" value="1"/>
</dbReference>
<dbReference type="PANTHER" id="PTHR16830">
    <property type="entry name" value="SH2 CONTAINING ADAPTOR PRAM-1 RELATED"/>
    <property type="match status" value="1"/>
</dbReference>
<dbReference type="Pfam" id="PF14603">
    <property type="entry name" value="hSH3"/>
    <property type="match status" value="1"/>
</dbReference>
<dbReference type="SUPFAM" id="SSF50044">
    <property type="entry name" value="SH3-domain"/>
    <property type="match status" value="1"/>
</dbReference>
<dbReference type="PROSITE" id="PS50002">
    <property type="entry name" value="SH3"/>
    <property type="match status" value="1"/>
</dbReference>
<keyword id="KW-0025">Alternative splicing</keyword>
<keyword id="KW-0472">Membrane</keyword>
<keyword id="KW-0597">Phosphoprotein</keyword>
<keyword id="KW-1267">Proteomics identification</keyword>
<keyword id="KW-1185">Reference proteome</keyword>
<keyword id="KW-0728">SH3 domain</keyword>
<comment type="function">
    <text evidence="3">Adapter protein that plays a role in T-cell receptor (TCR)-mediated activation of signaling pathways. Required for T-cell activation and integrin-mediated T-cell adhesion in response to TCR stimulation (PubMed:27335501).</text>
</comment>
<comment type="subunit">
    <text evidence="3">Interacts with SKAP1, LCK and FYN. The phosphorylated form interacts with LCP2.</text>
</comment>
<comment type="subcellular location">
    <subcellularLocation>
        <location evidence="3">Membrane raft</location>
    </subcellularLocation>
    <text evidence="3">Recruited to membrane rafts and immunological synapse after TCR stimulation.</text>
</comment>
<comment type="alternative products">
    <event type="alternative splicing"/>
    <isoform>
        <id>Q5VWT5-1</id>
        <name>1</name>
        <sequence type="displayed"/>
    </isoform>
    <isoform>
        <id>Q5VWT5-2</id>
        <name>2</name>
        <sequence type="described" ref="VSP_028031 VSP_028032"/>
    </isoform>
</comment>
<comment type="tissue specificity">
    <text evidence="3">Expressed in T-cells (at protein level). Widely expressed.</text>
</comment>
<comment type="PTM">
    <text evidence="3">Phosphorylation is required for its function in T-cell activation.</text>
</comment>
<name>FYB2_HUMAN</name>
<gene>
    <name evidence="7" type="primary">FYB2</name>
    <name evidence="5" type="synonym">ARAP</name>
    <name type="synonym">C1orf168</name>
</gene>